<organism>
    <name type="scientific">Eremothecium gossypii (strain ATCC 10895 / CBS 109.51 / FGSC 9923 / NRRL Y-1056)</name>
    <name type="common">Yeast</name>
    <name type="synonym">Ashbya gossypii</name>
    <dbReference type="NCBI Taxonomy" id="284811"/>
    <lineage>
        <taxon>Eukaryota</taxon>
        <taxon>Fungi</taxon>
        <taxon>Dikarya</taxon>
        <taxon>Ascomycota</taxon>
        <taxon>Saccharomycotina</taxon>
        <taxon>Saccharomycetes</taxon>
        <taxon>Saccharomycetales</taxon>
        <taxon>Saccharomycetaceae</taxon>
        <taxon>Eremothecium</taxon>
    </lineage>
</organism>
<feature type="chain" id="PRO_0000330095" description="Mitochondrial division protein 1">
    <location>
        <begin position="1"/>
        <end position="715"/>
    </location>
</feature>
<feature type="repeat" description="WD 1">
    <location>
        <begin position="409"/>
        <end position="449"/>
    </location>
</feature>
<feature type="repeat" description="WD 2">
    <location>
        <begin position="452"/>
        <end position="490"/>
    </location>
</feature>
<feature type="repeat" description="WD 3">
    <location>
        <begin position="503"/>
        <end position="542"/>
    </location>
</feature>
<feature type="repeat" description="WD 4">
    <location>
        <begin position="564"/>
        <end position="604"/>
    </location>
</feature>
<feature type="repeat" description="WD 5">
    <location>
        <begin position="605"/>
        <end position="644"/>
    </location>
</feature>
<feature type="repeat" description="WD 6">
    <location>
        <begin position="646"/>
        <end position="681"/>
    </location>
</feature>
<feature type="repeat" description="WD 7">
    <location>
        <begin position="685"/>
        <end position="715"/>
    </location>
</feature>
<feature type="region of interest" description="Disordered" evidence="3">
    <location>
        <begin position="122"/>
        <end position="147"/>
    </location>
</feature>
<feature type="region of interest" description="Disordered" evidence="3">
    <location>
        <begin position="313"/>
        <end position="380"/>
    </location>
</feature>
<feature type="coiled-coil region" evidence="2">
    <location>
        <begin position="228"/>
        <end position="268"/>
    </location>
</feature>
<feature type="compositionally biased region" description="Polar residues" evidence="3">
    <location>
        <begin position="347"/>
        <end position="358"/>
    </location>
</feature>
<feature type="compositionally biased region" description="Basic residues" evidence="3">
    <location>
        <begin position="359"/>
        <end position="375"/>
    </location>
</feature>
<gene>
    <name type="primary">MDV1</name>
    <name type="ordered locus">AEL314W</name>
</gene>
<evidence type="ECO:0000250" key="1"/>
<evidence type="ECO:0000255" key="2"/>
<evidence type="ECO:0000256" key="3">
    <source>
        <dbReference type="SAM" id="MobiDB-lite"/>
    </source>
</evidence>
<evidence type="ECO:0000305" key="4"/>
<accession>Q758R7</accession>
<proteinExistence type="inferred from homology"/>
<sequence length="715" mass="79870">MSSGTSGDQISHFGKTLTTTASLVFGSQSMEDTILSYSSPYKKILHDTITSSGGTSSLMKVERSGRMFTPFRTRNSAFQDIFHASSGRGYFKNGFSDTRTSFQVLSYLSDAMLADIPSSESAAATSGKLVTEKGEKGKKKRAETAHARGPSLYQGFEASLPTINQTITTHQKKQIMNRDIKSIRESDATPEDVGQDVDIEKGEEETTHDEFTLPKGIKPEHLSNSYSIKNLKGAVQTITDNLDLLEIQKNLAASEIRELDLKMEKLKLMRDLVFRRVAKIEQNELFLEKHLMNIRERIDMIEEYNLDNDTDAEKAYEEATSAPEDTKDQYSELPDANTAESGETVVQEPQVNLASAQKSLKKRSKQTGYSHKNHEKKVQQHEFRHLRKTYPTLQQYYEPGANILSFDSAHEDNVTCLDFNLPFGTLCSAGKLDPTIKVWNLSKNKHVASITGHLATVSCMQMDQYNTLITGGRDALLKMWDIQKAIDNDSIPSDEVCIYTFDSHIDEITALSFEANNLVSGSQDRTIRQWDLNNGKCVQTLDINFATGGNLSRSMIGSGFLNTNNDHPIIGAIQCYDAALATGTKDGIVRLWDLRSGRVVRTLEGHSDAVTSLQFDSLNLVTGSLDNSIRIWDLRTGTLADTFSYEHPVTCLQFDLNKIVVANQEGTVKVYNRQEKKHWFCGGDEHSENAVEYVRYKDGYLVEGRANGDINAWAI</sequence>
<protein>
    <recommendedName>
        <fullName>Mitochondrial division protein 1</fullName>
    </recommendedName>
</protein>
<comment type="function">
    <text evidence="1">Involved in mitochondrial fission. Acts as an adapter protein required to form mitochondrial fission complexes. Formation of these complexes is required to promote constriction and fission of the mitochondrial compartment at a late step in mitochondrial division (By similarity).</text>
</comment>
<comment type="subcellular location">
    <subcellularLocation>
        <location evidence="1">Mitochondrion outer membrane</location>
        <topology evidence="1">Peripheral membrane protein</topology>
        <orientation evidence="1">Cytoplasmic side</orientation>
    </subcellularLocation>
</comment>
<comment type="similarity">
    <text evidence="4">Belongs to the WD repeat MDV1/CAF4 family.</text>
</comment>
<reference key="1">
    <citation type="journal article" date="2004" name="Science">
        <title>The Ashbya gossypii genome as a tool for mapping the ancient Saccharomyces cerevisiae genome.</title>
        <authorList>
            <person name="Dietrich F.S."/>
            <person name="Voegeli S."/>
            <person name="Brachat S."/>
            <person name="Lerch A."/>
            <person name="Gates K."/>
            <person name="Steiner S."/>
            <person name="Mohr C."/>
            <person name="Poehlmann R."/>
            <person name="Luedi P."/>
            <person name="Choi S."/>
            <person name="Wing R.A."/>
            <person name="Flavier A."/>
            <person name="Gaffney T.D."/>
            <person name="Philippsen P."/>
        </authorList>
    </citation>
    <scope>NUCLEOTIDE SEQUENCE [LARGE SCALE GENOMIC DNA]</scope>
    <source>
        <strain>ATCC 10895 / CBS 109.51 / FGSC 9923 / NRRL Y-1056</strain>
    </source>
</reference>
<reference key="2">
    <citation type="journal article" date="2013" name="G3 (Bethesda)">
        <title>Genomes of Ashbya fungi isolated from insects reveal four mating-type loci, numerous translocations, lack of transposons, and distinct gene duplications.</title>
        <authorList>
            <person name="Dietrich F.S."/>
            <person name="Voegeli S."/>
            <person name="Kuo S."/>
            <person name="Philippsen P."/>
        </authorList>
    </citation>
    <scope>GENOME REANNOTATION</scope>
    <source>
        <strain>ATCC 10895 / CBS 109.51 / FGSC 9923 / NRRL Y-1056</strain>
    </source>
</reference>
<dbReference type="EMBL" id="AE016818">
    <property type="protein sequence ID" value="AAS52370.1"/>
    <property type="molecule type" value="Genomic_DNA"/>
</dbReference>
<dbReference type="RefSeq" id="NP_984546.1">
    <property type="nucleotide sequence ID" value="NM_209899.1"/>
</dbReference>
<dbReference type="SMR" id="Q758R7"/>
<dbReference type="FunCoup" id="Q758R7">
    <property type="interactions" value="61"/>
</dbReference>
<dbReference type="STRING" id="284811.Q758R7"/>
<dbReference type="EnsemblFungi" id="AAS52370">
    <property type="protein sequence ID" value="AAS52370"/>
    <property type="gene ID" value="AGOS_AEL314W"/>
</dbReference>
<dbReference type="GeneID" id="4620718"/>
<dbReference type="KEGG" id="ago:AGOS_AEL314W"/>
<dbReference type="eggNOG" id="KOG4155">
    <property type="taxonomic scope" value="Eukaryota"/>
</dbReference>
<dbReference type="HOGENOM" id="CLU_012350_1_0_1"/>
<dbReference type="InParanoid" id="Q758R7"/>
<dbReference type="OMA" id="ERLRYMD"/>
<dbReference type="OrthoDB" id="496at2759"/>
<dbReference type="Proteomes" id="UP000000591">
    <property type="component" value="Chromosome V"/>
</dbReference>
<dbReference type="GO" id="GO:0005741">
    <property type="term" value="C:mitochondrial outer membrane"/>
    <property type="evidence" value="ECO:0007669"/>
    <property type="project" value="UniProtKB-SubCell"/>
</dbReference>
<dbReference type="GO" id="GO:0005739">
    <property type="term" value="C:mitochondrion"/>
    <property type="evidence" value="ECO:0000318"/>
    <property type="project" value="GO_Central"/>
</dbReference>
<dbReference type="GO" id="GO:1990234">
    <property type="term" value="C:transferase complex"/>
    <property type="evidence" value="ECO:0007669"/>
    <property type="project" value="UniProtKB-ARBA"/>
</dbReference>
<dbReference type="GO" id="GO:0043130">
    <property type="term" value="F:ubiquitin binding"/>
    <property type="evidence" value="ECO:0007669"/>
    <property type="project" value="EnsemblFungi"/>
</dbReference>
<dbReference type="GO" id="GO:0000266">
    <property type="term" value="P:mitochondrial fission"/>
    <property type="evidence" value="ECO:0000318"/>
    <property type="project" value="GO_Central"/>
</dbReference>
<dbReference type="GO" id="GO:0000002">
    <property type="term" value="P:mitochondrial genome maintenance"/>
    <property type="evidence" value="ECO:0007669"/>
    <property type="project" value="EnsemblFungi"/>
</dbReference>
<dbReference type="GO" id="GO:0016559">
    <property type="term" value="P:peroxisome fission"/>
    <property type="evidence" value="ECO:0000318"/>
    <property type="project" value="GO_Central"/>
</dbReference>
<dbReference type="GO" id="GO:0090141">
    <property type="term" value="P:positive regulation of mitochondrial fission"/>
    <property type="evidence" value="ECO:0007669"/>
    <property type="project" value="EnsemblFungi"/>
</dbReference>
<dbReference type="CDD" id="cd22881">
    <property type="entry name" value="Mdv1_N"/>
    <property type="match status" value="1"/>
</dbReference>
<dbReference type="CDD" id="cd00200">
    <property type="entry name" value="WD40"/>
    <property type="match status" value="1"/>
</dbReference>
<dbReference type="FunFam" id="2.130.10.10:FF:001053">
    <property type="entry name" value="Mitochondrial division protein 1"/>
    <property type="match status" value="1"/>
</dbReference>
<dbReference type="Gene3D" id="6.10.280.220">
    <property type="match status" value="1"/>
</dbReference>
<dbReference type="Gene3D" id="2.130.10.10">
    <property type="entry name" value="YVTN repeat-like/Quinoprotein amine dehydrogenase"/>
    <property type="match status" value="2"/>
</dbReference>
<dbReference type="InterPro" id="IPR020472">
    <property type="entry name" value="G-protein_beta_WD-40_rep"/>
</dbReference>
<dbReference type="InterPro" id="IPR015943">
    <property type="entry name" value="WD40/YVTN_repeat-like_dom_sf"/>
</dbReference>
<dbReference type="InterPro" id="IPR019775">
    <property type="entry name" value="WD40_repeat_CS"/>
</dbReference>
<dbReference type="InterPro" id="IPR036322">
    <property type="entry name" value="WD40_repeat_dom_sf"/>
</dbReference>
<dbReference type="InterPro" id="IPR001680">
    <property type="entry name" value="WD40_rpt"/>
</dbReference>
<dbReference type="PANTHER" id="PTHR22847:SF637">
    <property type="entry name" value="WD REPEAT DOMAIN 5B"/>
    <property type="match status" value="1"/>
</dbReference>
<dbReference type="PANTHER" id="PTHR22847">
    <property type="entry name" value="WD40 REPEAT PROTEIN"/>
    <property type="match status" value="1"/>
</dbReference>
<dbReference type="Pfam" id="PF00400">
    <property type="entry name" value="WD40"/>
    <property type="match status" value="4"/>
</dbReference>
<dbReference type="PRINTS" id="PR00320">
    <property type="entry name" value="GPROTEINBRPT"/>
</dbReference>
<dbReference type="SMART" id="SM00320">
    <property type="entry name" value="WD40"/>
    <property type="match status" value="6"/>
</dbReference>
<dbReference type="SUPFAM" id="SSF50978">
    <property type="entry name" value="WD40 repeat-like"/>
    <property type="match status" value="1"/>
</dbReference>
<dbReference type="PROSITE" id="PS00678">
    <property type="entry name" value="WD_REPEATS_1"/>
    <property type="match status" value="4"/>
</dbReference>
<dbReference type="PROSITE" id="PS50082">
    <property type="entry name" value="WD_REPEATS_2"/>
    <property type="match status" value="5"/>
</dbReference>
<dbReference type="PROSITE" id="PS50294">
    <property type="entry name" value="WD_REPEATS_REGION"/>
    <property type="match status" value="1"/>
</dbReference>
<keyword id="KW-0175">Coiled coil</keyword>
<keyword id="KW-0472">Membrane</keyword>
<keyword id="KW-0496">Mitochondrion</keyword>
<keyword id="KW-1000">Mitochondrion outer membrane</keyword>
<keyword id="KW-1185">Reference proteome</keyword>
<keyword id="KW-0677">Repeat</keyword>
<keyword id="KW-0853">WD repeat</keyword>
<name>MDV1_EREGS</name>